<feature type="chain" id="PRO_1000206552" description="Large ribosomal subunit protein bL9">
    <location>
        <begin position="1"/>
        <end position="149"/>
    </location>
</feature>
<proteinExistence type="inferred from homology"/>
<name>RL9_GEOSW</name>
<gene>
    <name evidence="1" type="primary">rplI</name>
    <name type="ordered locus">GWCH70_3412</name>
</gene>
<dbReference type="EMBL" id="CP001638">
    <property type="protein sequence ID" value="ACS26049.1"/>
    <property type="molecule type" value="Genomic_DNA"/>
</dbReference>
<dbReference type="SMR" id="C5D9X1"/>
<dbReference type="STRING" id="471223.GWCH70_3412"/>
<dbReference type="KEGG" id="gwc:GWCH70_3412"/>
<dbReference type="eggNOG" id="COG0359">
    <property type="taxonomic scope" value="Bacteria"/>
</dbReference>
<dbReference type="HOGENOM" id="CLU_078938_3_2_9"/>
<dbReference type="OrthoDB" id="9788336at2"/>
<dbReference type="GO" id="GO:1990904">
    <property type="term" value="C:ribonucleoprotein complex"/>
    <property type="evidence" value="ECO:0007669"/>
    <property type="project" value="UniProtKB-KW"/>
</dbReference>
<dbReference type="GO" id="GO:0005840">
    <property type="term" value="C:ribosome"/>
    <property type="evidence" value="ECO:0007669"/>
    <property type="project" value="UniProtKB-KW"/>
</dbReference>
<dbReference type="GO" id="GO:0019843">
    <property type="term" value="F:rRNA binding"/>
    <property type="evidence" value="ECO:0007669"/>
    <property type="project" value="UniProtKB-UniRule"/>
</dbReference>
<dbReference type="GO" id="GO:0003735">
    <property type="term" value="F:structural constituent of ribosome"/>
    <property type="evidence" value="ECO:0007669"/>
    <property type="project" value="InterPro"/>
</dbReference>
<dbReference type="GO" id="GO:0006412">
    <property type="term" value="P:translation"/>
    <property type="evidence" value="ECO:0007669"/>
    <property type="project" value="UniProtKB-UniRule"/>
</dbReference>
<dbReference type="FunFam" id="3.10.430.100:FF:000002">
    <property type="entry name" value="50S ribosomal protein L9"/>
    <property type="match status" value="1"/>
</dbReference>
<dbReference type="FunFam" id="3.40.5.10:FF:000002">
    <property type="entry name" value="50S ribosomal protein L9"/>
    <property type="match status" value="1"/>
</dbReference>
<dbReference type="Gene3D" id="3.10.430.100">
    <property type="entry name" value="Ribosomal protein L9, C-terminal domain"/>
    <property type="match status" value="1"/>
</dbReference>
<dbReference type="Gene3D" id="3.40.5.10">
    <property type="entry name" value="Ribosomal protein L9, N-terminal domain"/>
    <property type="match status" value="1"/>
</dbReference>
<dbReference type="HAMAP" id="MF_00503">
    <property type="entry name" value="Ribosomal_bL9"/>
    <property type="match status" value="1"/>
</dbReference>
<dbReference type="InterPro" id="IPR000244">
    <property type="entry name" value="Ribosomal_bL9"/>
</dbReference>
<dbReference type="InterPro" id="IPR009027">
    <property type="entry name" value="Ribosomal_bL9/RNase_H1_N"/>
</dbReference>
<dbReference type="InterPro" id="IPR020594">
    <property type="entry name" value="Ribosomal_bL9_bac/chp"/>
</dbReference>
<dbReference type="InterPro" id="IPR020069">
    <property type="entry name" value="Ribosomal_bL9_C"/>
</dbReference>
<dbReference type="InterPro" id="IPR036791">
    <property type="entry name" value="Ribosomal_bL9_C_sf"/>
</dbReference>
<dbReference type="InterPro" id="IPR020070">
    <property type="entry name" value="Ribosomal_bL9_N"/>
</dbReference>
<dbReference type="InterPro" id="IPR036935">
    <property type="entry name" value="Ribosomal_bL9_N_sf"/>
</dbReference>
<dbReference type="NCBIfam" id="TIGR00158">
    <property type="entry name" value="L9"/>
    <property type="match status" value="1"/>
</dbReference>
<dbReference type="PANTHER" id="PTHR21368">
    <property type="entry name" value="50S RIBOSOMAL PROTEIN L9"/>
    <property type="match status" value="1"/>
</dbReference>
<dbReference type="Pfam" id="PF03948">
    <property type="entry name" value="Ribosomal_L9_C"/>
    <property type="match status" value="1"/>
</dbReference>
<dbReference type="Pfam" id="PF01281">
    <property type="entry name" value="Ribosomal_L9_N"/>
    <property type="match status" value="1"/>
</dbReference>
<dbReference type="SUPFAM" id="SSF55658">
    <property type="entry name" value="L9 N-domain-like"/>
    <property type="match status" value="1"/>
</dbReference>
<dbReference type="SUPFAM" id="SSF55653">
    <property type="entry name" value="Ribosomal protein L9 C-domain"/>
    <property type="match status" value="1"/>
</dbReference>
<dbReference type="PROSITE" id="PS00651">
    <property type="entry name" value="RIBOSOMAL_L9"/>
    <property type="match status" value="1"/>
</dbReference>
<reference key="1">
    <citation type="submission" date="2009-06" db="EMBL/GenBank/DDBJ databases">
        <title>Complete sequence of chromosome of Geopacillus sp. WCH70.</title>
        <authorList>
            <consortium name="US DOE Joint Genome Institute"/>
            <person name="Lucas S."/>
            <person name="Copeland A."/>
            <person name="Lapidus A."/>
            <person name="Glavina del Rio T."/>
            <person name="Dalin E."/>
            <person name="Tice H."/>
            <person name="Bruce D."/>
            <person name="Goodwin L."/>
            <person name="Pitluck S."/>
            <person name="Chertkov O."/>
            <person name="Brettin T."/>
            <person name="Detter J.C."/>
            <person name="Han C."/>
            <person name="Larimer F."/>
            <person name="Land M."/>
            <person name="Hauser L."/>
            <person name="Kyrpides N."/>
            <person name="Mikhailova N."/>
            <person name="Brumm P."/>
            <person name="Mead D.A."/>
            <person name="Richardson P."/>
        </authorList>
    </citation>
    <scope>NUCLEOTIDE SEQUENCE [LARGE SCALE GENOMIC DNA]</scope>
    <source>
        <strain>WCH70</strain>
    </source>
</reference>
<organism>
    <name type="scientific">Geobacillus sp. (strain WCH70)</name>
    <dbReference type="NCBI Taxonomy" id="471223"/>
    <lineage>
        <taxon>Bacteria</taxon>
        <taxon>Bacillati</taxon>
        <taxon>Bacillota</taxon>
        <taxon>Bacilli</taxon>
        <taxon>Bacillales</taxon>
        <taxon>Anoxybacillaceae</taxon>
        <taxon>Geobacillus</taxon>
    </lineage>
</organism>
<comment type="function">
    <text evidence="1">Binds to the 23S rRNA.</text>
</comment>
<comment type="similarity">
    <text evidence="1">Belongs to the bacterial ribosomal protein bL9 family.</text>
</comment>
<sequence>MKVIFLKDVKGKGKKGEIKNVADGYANNFLFKQGLAIEATPANIKALEAQKRKEQRQAEEELAKAKQLKEKLEQITVELSAKAGEGGRLFGSITSKQIAEVLQSQHQIKIDKRKIELDDAIRSLGYTNVPVKLHPEVTATLKVHVTEQK</sequence>
<accession>C5D9X1</accession>
<protein>
    <recommendedName>
        <fullName evidence="1">Large ribosomal subunit protein bL9</fullName>
    </recommendedName>
    <alternativeName>
        <fullName evidence="2">50S ribosomal protein L9</fullName>
    </alternativeName>
</protein>
<evidence type="ECO:0000255" key="1">
    <source>
        <dbReference type="HAMAP-Rule" id="MF_00503"/>
    </source>
</evidence>
<evidence type="ECO:0000305" key="2"/>
<keyword id="KW-0687">Ribonucleoprotein</keyword>
<keyword id="KW-0689">Ribosomal protein</keyword>
<keyword id="KW-0694">RNA-binding</keyword>
<keyword id="KW-0699">rRNA-binding</keyword>